<dbReference type="EMBL" id="CP000703">
    <property type="protein sequence ID" value="ABQ48485.1"/>
    <property type="molecule type" value="Genomic_DNA"/>
</dbReference>
<dbReference type="RefSeq" id="WP_001166500.1">
    <property type="nucleotide sequence ID" value="NC_009487.1"/>
</dbReference>
<dbReference type="SMR" id="A5IQL2"/>
<dbReference type="KEGG" id="saj:SaurJH9_0682"/>
<dbReference type="HOGENOM" id="CLU_000445_30_3_9"/>
<dbReference type="GO" id="GO:0005829">
    <property type="term" value="C:cytosol"/>
    <property type="evidence" value="ECO:0007669"/>
    <property type="project" value="TreeGrafter"/>
</dbReference>
<dbReference type="GO" id="GO:0032993">
    <property type="term" value="C:protein-DNA complex"/>
    <property type="evidence" value="ECO:0007669"/>
    <property type="project" value="TreeGrafter"/>
</dbReference>
<dbReference type="GO" id="GO:0000156">
    <property type="term" value="F:phosphorelay response regulator activity"/>
    <property type="evidence" value="ECO:0007669"/>
    <property type="project" value="TreeGrafter"/>
</dbReference>
<dbReference type="GO" id="GO:0000976">
    <property type="term" value="F:transcription cis-regulatory region binding"/>
    <property type="evidence" value="ECO:0007669"/>
    <property type="project" value="TreeGrafter"/>
</dbReference>
<dbReference type="GO" id="GO:0006355">
    <property type="term" value="P:regulation of DNA-templated transcription"/>
    <property type="evidence" value="ECO:0007669"/>
    <property type="project" value="InterPro"/>
</dbReference>
<dbReference type="GO" id="GO:0046677">
    <property type="term" value="P:response to antibiotic"/>
    <property type="evidence" value="ECO:0007669"/>
    <property type="project" value="UniProtKB-KW"/>
</dbReference>
<dbReference type="CDD" id="cd18159">
    <property type="entry name" value="REC_OmpR_NsrR-like"/>
    <property type="match status" value="1"/>
</dbReference>
<dbReference type="CDD" id="cd00383">
    <property type="entry name" value="trans_reg_C"/>
    <property type="match status" value="1"/>
</dbReference>
<dbReference type="FunFam" id="3.40.50.2300:FF:000232">
    <property type="entry name" value="Response regulator GraR"/>
    <property type="match status" value="1"/>
</dbReference>
<dbReference type="FunFam" id="1.10.10.10:FF:000546">
    <property type="entry name" value="Two-component response regulator GraR"/>
    <property type="match status" value="1"/>
</dbReference>
<dbReference type="Gene3D" id="3.40.50.2300">
    <property type="match status" value="1"/>
</dbReference>
<dbReference type="Gene3D" id="1.10.10.10">
    <property type="entry name" value="Winged helix-like DNA-binding domain superfamily/Winged helix DNA-binding domain"/>
    <property type="match status" value="1"/>
</dbReference>
<dbReference type="InterPro" id="IPR011006">
    <property type="entry name" value="CheY-like_superfamily"/>
</dbReference>
<dbReference type="InterPro" id="IPR001867">
    <property type="entry name" value="OmpR/PhoB-type_DNA-bd"/>
</dbReference>
<dbReference type="InterPro" id="IPR016032">
    <property type="entry name" value="Sig_transdc_resp-reg_C-effctor"/>
</dbReference>
<dbReference type="InterPro" id="IPR001789">
    <property type="entry name" value="Sig_transdc_resp-reg_receiver"/>
</dbReference>
<dbReference type="InterPro" id="IPR039420">
    <property type="entry name" value="WalR-like"/>
</dbReference>
<dbReference type="InterPro" id="IPR036388">
    <property type="entry name" value="WH-like_DNA-bd_sf"/>
</dbReference>
<dbReference type="PANTHER" id="PTHR48111">
    <property type="entry name" value="REGULATOR OF RPOS"/>
    <property type="match status" value="1"/>
</dbReference>
<dbReference type="PANTHER" id="PTHR48111:SF27">
    <property type="entry name" value="SENSORY TRANSDUCTION PROTEIN BCER"/>
    <property type="match status" value="1"/>
</dbReference>
<dbReference type="Pfam" id="PF00072">
    <property type="entry name" value="Response_reg"/>
    <property type="match status" value="1"/>
</dbReference>
<dbReference type="Pfam" id="PF00486">
    <property type="entry name" value="Trans_reg_C"/>
    <property type="match status" value="1"/>
</dbReference>
<dbReference type="SMART" id="SM00448">
    <property type="entry name" value="REC"/>
    <property type="match status" value="1"/>
</dbReference>
<dbReference type="SMART" id="SM00862">
    <property type="entry name" value="Trans_reg_C"/>
    <property type="match status" value="1"/>
</dbReference>
<dbReference type="SUPFAM" id="SSF46894">
    <property type="entry name" value="C-terminal effector domain of the bipartite response regulators"/>
    <property type="match status" value="1"/>
</dbReference>
<dbReference type="SUPFAM" id="SSF52172">
    <property type="entry name" value="CheY-like"/>
    <property type="match status" value="1"/>
</dbReference>
<dbReference type="PROSITE" id="PS51755">
    <property type="entry name" value="OMPR_PHOB"/>
    <property type="match status" value="1"/>
</dbReference>
<dbReference type="PROSITE" id="PS50110">
    <property type="entry name" value="RESPONSE_REGULATORY"/>
    <property type="match status" value="1"/>
</dbReference>
<name>GRAR_STAA9</name>
<comment type="function">
    <text evidence="3">Member of the two-component regulatory system GraR/GraS involved in resistance against cationic antimicrobial peptides (CAMPs). Upon phosphorylation by GraS, functions as a transcription regulator by direct binding to promoter regions of target genes such as adhesins, exoproteins, transporters, toxins, and proteins involved in cell wall synthesis. Down-regulates the expression of many genes involved in RNA and amino acid synthesis or glycolysis.</text>
</comment>
<comment type="subunit">
    <text evidence="2">Interacts with GraX.</text>
</comment>
<comment type="subcellular location">
    <subcellularLocation>
        <location evidence="1">Cytoplasm</location>
    </subcellularLocation>
</comment>
<comment type="PTM">
    <text evidence="3">Phosphorylated by GraS. Phosphorylated by Stk1; phosphorylation increases the DNA-binding activity of GraR.</text>
</comment>
<protein>
    <recommendedName>
        <fullName>Response regulator protein GraR</fullName>
    </recommendedName>
    <alternativeName>
        <fullName>Glycopeptide resistance-associated protein R</fullName>
    </alternativeName>
</protein>
<keyword id="KW-0010">Activator</keyword>
<keyword id="KW-0046">Antibiotic resistance</keyword>
<keyword id="KW-0963">Cytoplasm</keyword>
<keyword id="KW-0238">DNA-binding</keyword>
<keyword id="KW-0597">Phosphoprotein</keyword>
<keyword id="KW-0678">Repressor</keyword>
<keyword id="KW-0804">Transcription</keyword>
<keyword id="KW-0805">Transcription regulation</keyword>
<keyword id="KW-0902">Two-component regulatory system</keyword>
<keyword id="KW-0843">Virulence</keyword>
<sequence length="224" mass="26066">MQILLVEDDNTLFQELKKELEQWDFNVAGIEDFGKVMDTFESFNPEIVILDVQLPKYDGFYWCRKMREVSNVPILFLSSRDNPMDQVMSMELGADDYMQKPFYTNVLIAKLQAIYRRVYEFTAEEKRTLTWQDAVVDLSKDSIQKGDDTIFLSKTEMIILEILITKKNQIVSRDTIITALWDDEAFVSDNTLTVNVNRLRKKLSEISMDSAIETKVGKGYMAHE</sequence>
<gene>
    <name type="primary">graR</name>
    <name type="ordered locus">SaurJH9_0682</name>
</gene>
<accession>A5IQL2</accession>
<feature type="chain" id="PRO_0000347898" description="Response regulator protein GraR">
    <location>
        <begin position="1"/>
        <end position="224"/>
    </location>
</feature>
<feature type="domain" description="Response regulatory" evidence="4">
    <location>
        <begin position="2"/>
        <end position="115"/>
    </location>
</feature>
<feature type="DNA-binding region" description="OmpR/PhoB-type" evidence="5">
    <location>
        <begin position="126"/>
        <end position="224"/>
    </location>
</feature>
<feature type="modified residue" description="4-aspartylphosphate" evidence="4">
    <location>
        <position position="51"/>
    </location>
</feature>
<feature type="modified residue" description="Phosphothreonine" evidence="3">
    <location>
        <position position="128"/>
    </location>
</feature>
<feature type="modified residue" description="Phosphothreonine" evidence="3">
    <location>
        <position position="130"/>
    </location>
</feature>
<feature type="modified residue" description="Phosphothreonine" evidence="3">
    <location>
        <position position="149"/>
    </location>
</feature>
<reference key="1">
    <citation type="submission" date="2007-05" db="EMBL/GenBank/DDBJ databases">
        <title>Complete sequence of chromosome of Staphylococcus aureus subsp. aureus JH9.</title>
        <authorList>
            <consortium name="US DOE Joint Genome Institute"/>
            <person name="Copeland A."/>
            <person name="Lucas S."/>
            <person name="Lapidus A."/>
            <person name="Barry K."/>
            <person name="Detter J.C."/>
            <person name="Glavina del Rio T."/>
            <person name="Hammon N."/>
            <person name="Israni S."/>
            <person name="Pitluck S."/>
            <person name="Chain P."/>
            <person name="Malfatti S."/>
            <person name="Shin M."/>
            <person name="Vergez L."/>
            <person name="Schmutz J."/>
            <person name="Larimer F."/>
            <person name="Land M."/>
            <person name="Hauser L."/>
            <person name="Kyrpides N."/>
            <person name="Kim E."/>
            <person name="Tomasz A."/>
            <person name="Richardson P."/>
        </authorList>
    </citation>
    <scope>NUCLEOTIDE SEQUENCE [LARGE SCALE GENOMIC DNA]</scope>
    <source>
        <strain>JH9</strain>
    </source>
</reference>
<organism>
    <name type="scientific">Staphylococcus aureus (strain JH9)</name>
    <dbReference type="NCBI Taxonomy" id="359786"/>
    <lineage>
        <taxon>Bacteria</taxon>
        <taxon>Bacillati</taxon>
        <taxon>Bacillota</taxon>
        <taxon>Bacilli</taxon>
        <taxon>Bacillales</taxon>
        <taxon>Staphylococcaceae</taxon>
        <taxon>Staphylococcus</taxon>
    </lineage>
</organism>
<evidence type="ECO:0000250" key="1"/>
<evidence type="ECO:0000250" key="2">
    <source>
        <dbReference type="UniProtKB" id="Q2G0D9"/>
    </source>
</evidence>
<evidence type="ECO:0000250" key="3">
    <source>
        <dbReference type="UniProtKB" id="Q2G0E0"/>
    </source>
</evidence>
<evidence type="ECO:0000255" key="4">
    <source>
        <dbReference type="PROSITE-ProRule" id="PRU00169"/>
    </source>
</evidence>
<evidence type="ECO:0000255" key="5">
    <source>
        <dbReference type="PROSITE-ProRule" id="PRU01091"/>
    </source>
</evidence>
<proteinExistence type="inferred from homology"/>